<organism>
    <name type="scientific">Rhodopseudomonas palustris (strain BisB18)</name>
    <dbReference type="NCBI Taxonomy" id="316056"/>
    <lineage>
        <taxon>Bacteria</taxon>
        <taxon>Pseudomonadati</taxon>
        <taxon>Pseudomonadota</taxon>
        <taxon>Alphaproteobacteria</taxon>
        <taxon>Hyphomicrobiales</taxon>
        <taxon>Nitrobacteraceae</taxon>
        <taxon>Rhodopseudomonas</taxon>
    </lineage>
</organism>
<reference key="1">
    <citation type="submission" date="2006-03" db="EMBL/GenBank/DDBJ databases">
        <title>Complete sequence of Rhodopseudomonas palustris BisB18.</title>
        <authorList>
            <consortium name="US DOE Joint Genome Institute"/>
            <person name="Copeland A."/>
            <person name="Lucas S."/>
            <person name="Lapidus A."/>
            <person name="Barry K."/>
            <person name="Detter J.C."/>
            <person name="Glavina del Rio T."/>
            <person name="Hammon N."/>
            <person name="Israni S."/>
            <person name="Dalin E."/>
            <person name="Tice H."/>
            <person name="Pitluck S."/>
            <person name="Chain P."/>
            <person name="Malfatti S."/>
            <person name="Shin M."/>
            <person name="Vergez L."/>
            <person name="Schmutz J."/>
            <person name="Larimer F."/>
            <person name="Land M."/>
            <person name="Hauser L."/>
            <person name="Pelletier D.A."/>
            <person name="Kyrpides N."/>
            <person name="Anderson I."/>
            <person name="Oda Y."/>
            <person name="Harwood C.S."/>
            <person name="Richardson P."/>
        </authorList>
    </citation>
    <scope>NUCLEOTIDE SEQUENCE [LARGE SCALE GENOMIC DNA]</scope>
    <source>
        <strain>BisB18</strain>
    </source>
</reference>
<name>RL15_RHOPB</name>
<keyword id="KW-0687">Ribonucleoprotein</keyword>
<keyword id="KW-0689">Ribosomal protein</keyword>
<keyword id="KW-0694">RNA-binding</keyword>
<keyword id="KW-0699">rRNA-binding</keyword>
<feature type="chain" id="PRO_0000251551" description="Large ribosomal subunit protein uL15">
    <location>
        <begin position="1"/>
        <end position="162"/>
    </location>
</feature>
<feature type="region of interest" description="Disordered" evidence="2">
    <location>
        <begin position="1"/>
        <end position="41"/>
    </location>
</feature>
<feature type="compositionally biased region" description="Gly residues" evidence="2">
    <location>
        <begin position="21"/>
        <end position="37"/>
    </location>
</feature>
<sequence length="162" mass="17113">MKLSDIADNAGSRKKRMRVGRGIGSGKGKTAGRGGKGQTARSGVRIKGFEGGQMPLHRRLPKRGFNNIFRLDFAEINLDRLQEAVDAKTIDGSGVINAETLVASGVLRRAKDGVRLLGRGELKAKLTIEVHGATKTAIEAVEKAGGTVKILAPAKKDEGEAA</sequence>
<accession>Q211G7</accession>
<dbReference type="EMBL" id="CP000301">
    <property type="protein sequence ID" value="ABD88969.1"/>
    <property type="molecule type" value="Genomic_DNA"/>
</dbReference>
<dbReference type="SMR" id="Q211G7"/>
<dbReference type="STRING" id="316056.RPC_3429"/>
<dbReference type="KEGG" id="rpc:RPC_3429"/>
<dbReference type="eggNOG" id="COG0200">
    <property type="taxonomic scope" value="Bacteria"/>
</dbReference>
<dbReference type="HOGENOM" id="CLU_055188_4_0_5"/>
<dbReference type="OrthoDB" id="9810293at2"/>
<dbReference type="GO" id="GO:0022625">
    <property type="term" value="C:cytosolic large ribosomal subunit"/>
    <property type="evidence" value="ECO:0007669"/>
    <property type="project" value="TreeGrafter"/>
</dbReference>
<dbReference type="GO" id="GO:0019843">
    <property type="term" value="F:rRNA binding"/>
    <property type="evidence" value="ECO:0007669"/>
    <property type="project" value="UniProtKB-UniRule"/>
</dbReference>
<dbReference type="GO" id="GO:0003735">
    <property type="term" value="F:structural constituent of ribosome"/>
    <property type="evidence" value="ECO:0007669"/>
    <property type="project" value="InterPro"/>
</dbReference>
<dbReference type="GO" id="GO:0006412">
    <property type="term" value="P:translation"/>
    <property type="evidence" value="ECO:0007669"/>
    <property type="project" value="UniProtKB-UniRule"/>
</dbReference>
<dbReference type="Gene3D" id="3.100.10.10">
    <property type="match status" value="1"/>
</dbReference>
<dbReference type="HAMAP" id="MF_01341">
    <property type="entry name" value="Ribosomal_uL15"/>
    <property type="match status" value="1"/>
</dbReference>
<dbReference type="InterPro" id="IPR030878">
    <property type="entry name" value="Ribosomal_uL15"/>
</dbReference>
<dbReference type="InterPro" id="IPR021131">
    <property type="entry name" value="Ribosomal_uL15/eL18"/>
</dbReference>
<dbReference type="InterPro" id="IPR036227">
    <property type="entry name" value="Ribosomal_uL15/eL18_sf"/>
</dbReference>
<dbReference type="InterPro" id="IPR005749">
    <property type="entry name" value="Ribosomal_uL15_bac-type"/>
</dbReference>
<dbReference type="InterPro" id="IPR001196">
    <property type="entry name" value="Ribosomal_uL15_CS"/>
</dbReference>
<dbReference type="NCBIfam" id="TIGR01071">
    <property type="entry name" value="rplO_bact"/>
    <property type="match status" value="1"/>
</dbReference>
<dbReference type="PANTHER" id="PTHR12934">
    <property type="entry name" value="50S RIBOSOMAL PROTEIN L15"/>
    <property type="match status" value="1"/>
</dbReference>
<dbReference type="PANTHER" id="PTHR12934:SF11">
    <property type="entry name" value="LARGE RIBOSOMAL SUBUNIT PROTEIN UL15M"/>
    <property type="match status" value="1"/>
</dbReference>
<dbReference type="Pfam" id="PF00828">
    <property type="entry name" value="Ribosomal_L27A"/>
    <property type="match status" value="1"/>
</dbReference>
<dbReference type="SUPFAM" id="SSF52080">
    <property type="entry name" value="Ribosomal proteins L15p and L18e"/>
    <property type="match status" value="1"/>
</dbReference>
<dbReference type="PROSITE" id="PS00475">
    <property type="entry name" value="RIBOSOMAL_L15"/>
    <property type="match status" value="1"/>
</dbReference>
<gene>
    <name evidence="1" type="primary">rplO</name>
    <name type="ordered locus">RPC_3429</name>
</gene>
<protein>
    <recommendedName>
        <fullName evidence="1">Large ribosomal subunit protein uL15</fullName>
    </recommendedName>
    <alternativeName>
        <fullName evidence="3">50S ribosomal protein L15</fullName>
    </alternativeName>
</protein>
<evidence type="ECO:0000255" key="1">
    <source>
        <dbReference type="HAMAP-Rule" id="MF_01341"/>
    </source>
</evidence>
<evidence type="ECO:0000256" key="2">
    <source>
        <dbReference type="SAM" id="MobiDB-lite"/>
    </source>
</evidence>
<evidence type="ECO:0000305" key="3"/>
<proteinExistence type="inferred from homology"/>
<comment type="function">
    <text evidence="1">Binds to the 23S rRNA.</text>
</comment>
<comment type="subunit">
    <text evidence="1">Part of the 50S ribosomal subunit.</text>
</comment>
<comment type="similarity">
    <text evidence="1">Belongs to the universal ribosomal protein uL15 family.</text>
</comment>